<name>CTS31_CAEEL</name>
<reference key="1">
    <citation type="journal article" date="1998" name="Science">
        <title>Genome sequence of the nematode C. elegans: a platform for investigating biology.</title>
        <authorList>
            <consortium name="The C. elegans sequencing consortium"/>
        </authorList>
    </citation>
    <scope>NUCLEOTIDE SEQUENCE [LARGE SCALE GENOMIC DNA]</scope>
    <source>
        <strain>Bristol N2</strain>
    </source>
</reference>
<reference key="2">
    <citation type="journal article" date="2007" name="Mol. Cell. Proteomics">
        <title>Proteomics reveals N-linked glycoprotein diversity in Caenorhabditis elegans and suggests an atypical translocation mechanism for integral membrane proteins.</title>
        <authorList>
            <person name="Kaji H."/>
            <person name="Kamiie J."/>
            <person name="Kawakami H."/>
            <person name="Kido K."/>
            <person name="Yamauchi Y."/>
            <person name="Shinkawa T."/>
            <person name="Taoka M."/>
            <person name="Takahashi N."/>
            <person name="Isobe T."/>
        </authorList>
    </citation>
    <scope>GLYCOSYLATION [LARGE SCALE ANALYSIS] AT ASN-241 AND ASN-408</scope>
    <scope>IDENTIFICATION BY MASS SPECTROMETRY</scope>
    <source>
        <strain>Bristol N2</strain>
    </source>
</reference>
<gene>
    <name evidence="5" type="primary">ctsa-3.1</name>
    <name evidence="5" type="ORF">F32A5.3</name>
</gene>
<evidence type="ECO:0000250" key="1">
    <source>
        <dbReference type="UniProtKB" id="P52719"/>
    </source>
</evidence>
<evidence type="ECO:0000255" key="2"/>
<evidence type="ECO:0000269" key="3">
    <source>
    </source>
</evidence>
<evidence type="ECO:0000305" key="4"/>
<evidence type="ECO:0000312" key="5">
    <source>
        <dbReference type="WormBase" id="F32A5.3"/>
    </source>
</evidence>
<organism>
    <name type="scientific">Caenorhabditis elegans</name>
    <dbReference type="NCBI Taxonomy" id="6239"/>
    <lineage>
        <taxon>Eukaryota</taxon>
        <taxon>Metazoa</taxon>
        <taxon>Ecdysozoa</taxon>
        <taxon>Nematoda</taxon>
        <taxon>Chromadorea</taxon>
        <taxon>Rhabditida</taxon>
        <taxon>Rhabditina</taxon>
        <taxon>Rhabditomorpha</taxon>
        <taxon>Rhabditoidea</taxon>
        <taxon>Rhabditidae</taxon>
        <taxon>Peloderinae</taxon>
        <taxon>Caenorhabditis</taxon>
    </lineage>
</organism>
<comment type="similarity">
    <text evidence="4">Belongs to the peptidase S10 family.</text>
</comment>
<accession>P52716</accession>
<sequence length="574" mass="64087">MCRTLLGVAFLVVTVLSQGEKDLIQNLPGLLFKANFKSYSGYVDANANGTWKMHYMLTESRSNPDTDPLLVWFNGGPGCSSLGGLFEELGPFYVNFDGQTLYENPYAWNAKANVLYLESPIGVGYSYDTTTPGYFQANDDQSAAQNYQALTNFFNVAQPKYTNRTFYLSGESYAGIYIPMLTDLIVQGINNPNQPFPNKNFQGSAIGNGFMNVAGLLNALTLWSAYHGRVSEQNWADIKANCSKGADVDSFDFSQFTTSQNKIDYVGDGSYCGNLIQPLISQNALGNEGFDQYNFYQECYDKSVFQAPPPAGGKRHKRSAMQGVSSVQKNLQYQQLGNFQGTSNLAKNTATLVNRFSNDNQFGYFCWNEDAVSKYLNSDNVQNALNIPQAWKDQKNTWEDCRMSIYNNYTLKYNTTNRFFNNIITNLTTDFRFLIYNGDVDTVCNYLGDAKHILQVAKDNGLTSGPRTPWYYSNNQQLAGYVQTYSGKNKNNAMITIDLLTVKGAGHMVPYDRAGPSVQMISNFVWAPKNVVINYTSQDNFNPNIQLSDLVDSGSSSTVAFFISMFAVLLNIVF</sequence>
<keyword id="KW-0121">Carboxypeptidase</keyword>
<keyword id="KW-0325">Glycoprotein</keyword>
<keyword id="KW-0378">Hydrolase</keyword>
<keyword id="KW-0645">Protease</keyword>
<keyword id="KW-1185">Reference proteome</keyword>
<keyword id="KW-0732">Signal</keyword>
<feature type="signal peptide" evidence="2">
    <location>
        <begin position="1"/>
        <end position="19"/>
    </location>
</feature>
<feature type="chain" id="PRO_0000004338" description="Serine carboxypeptidase ctsa-3.1">
    <location>
        <begin position="20"/>
        <end position="574"/>
    </location>
</feature>
<feature type="active site" evidence="1">
    <location>
        <position position="172"/>
    </location>
</feature>
<feature type="active site" evidence="1">
    <location>
        <position position="441"/>
    </location>
</feature>
<feature type="active site" evidence="1">
    <location>
        <position position="507"/>
    </location>
</feature>
<feature type="glycosylation site" description="N-linked (GlcNAc...) asparagine" evidence="2">
    <location>
        <position position="48"/>
    </location>
</feature>
<feature type="glycosylation site" description="N-linked (GlcNAc...) asparagine" evidence="2">
    <location>
        <position position="163"/>
    </location>
</feature>
<feature type="glycosylation site" description="N-linked (GlcNAc...) asparagine" evidence="3">
    <location>
        <position position="241"/>
    </location>
</feature>
<feature type="glycosylation site" description="N-linked (GlcNAc...) asparagine" evidence="3">
    <location>
        <position position="408"/>
    </location>
</feature>
<feature type="glycosylation site" description="N-linked (GlcNAc...) asparagine" evidence="2">
    <location>
        <position position="414"/>
    </location>
</feature>
<feature type="glycosylation site" description="N-linked (GlcNAc...) asparagine" evidence="2">
    <location>
        <position position="426"/>
    </location>
</feature>
<feature type="glycosylation site" description="N-linked (GlcNAc...) asparagine" evidence="2">
    <location>
        <position position="534"/>
    </location>
</feature>
<proteinExistence type="evidence at protein level"/>
<dbReference type="EC" id="3.4.16.-" evidence="1"/>
<dbReference type="EMBL" id="BX284602">
    <property type="protein sequence ID" value="CCD66273.1"/>
    <property type="molecule type" value="Genomic_DNA"/>
</dbReference>
<dbReference type="PIR" id="T16230">
    <property type="entry name" value="T16230"/>
</dbReference>
<dbReference type="RefSeq" id="NP_495509.1">
    <property type="nucleotide sequence ID" value="NM_063108.8"/>
</dbReference>
<dbReference type="SMR" id="P52716"/>
<dbReference type="BioGRID" id="39525">
    <property type="interactions" value="8"/>
</dbReference>
<dbReference type="FunCoup" id="P52716">
    <property type="interactions" value="68"/>
</dbReference>
<dbReference type="STRING" id="6239.F32A5.3.1"/>
<dbReference type="ESTHER" id="caeel-f32a5.3">
    <property type="family name" value="Carboxypeptidase_S10"/>
</dbReference>
<dbReference type="MEROPS" id="S10.A65"/>
<dbReference type="GlyCosmos" id="P52716">
    <property type="glycosylation" value="7 sites, No reported glycans"/>
</dbReference>
<dbReference type="iPTMnet" id="P52716"/>
<dbReference type="PaxDb" id="6239-F32A5.3"/>
<dbReference type="PeptideAtlas" id="P52716"/>
<dbReference type="EnsemblMetazoa" id="F32A5.3.1">
    <property type="protein sequence ID" value="F32A5.3.1"/>
    <property type="gene ID" value="WBGene00017969"/>
</dbReference>
<dbReference type="GeneID" id="174189"/>
<dbReference type="KEGG" id="cel:CELE_F32A5.3"/>
<dbReference type="UCSC" id="F32A5.3">
    <property type="organism name" value="c. elegans"/>
</dbReference>
<dbReference type="AGR" id="WB:WBGene00017969"/>
<dbReference type="CTD" id="174189"/>
<dbReference type="WormBase" id="F32A5.3">
    <property type="protein sequence ID" value="CE01273"/>
    <property type="gene ID" value="WBGene00017969"/>
    <property type="gene designation" value="ctsa-3.1"/>
</dbReference>
<dbReference type="eggNOG" id="KOG1282">
    <property type="taxonomic scope" value="Eukaryota"/>
</dbReference>
<dbReference type="GeneTree" id="ENSGT00940000167871"/>
<dbReference type="HOGENOM" id="CLU_008523_13_3_1"/>
<dbReference type="InParanoid" id="P52716"/>
<dbReference type="OMA" id="WYYRQQV"/>
<dbReference type="OrthoDB" id="443318at2759"/>
<dbReference type="PhylomeDB" id="P52716"/>
<dbReference type="Reactome" id="R-CEL-2132295">
    <property type="pathway name" value="MHC class II antigen presentation"/>
</dbReference>
<dbReference type="Reactome" id="R-CEL-6798695">
    <property type="pathway name" value="Neutrophil degranulation"/>
</dbReference>
<dbReference type="PRO" id="PR:P52716"/>
<dbReference type="Proteomes" id="UP000001940">
    <property type="component" value="Chromosome II"/>
</dbReference>
<dbReference type="Bgee" id="WBGene00017969">
    <property type="expression patterns" value="Expressed in larva and 3 other cell types or tissues"/>
</dbReference>
<dbReference type="GO" id="GO:0045121">
    <property type="term" value="C:membrane raft"/>
    <property type="evidence" value="ECO:0007005"/>
    <property type="project" value="WormBase"/>
</dbReference>
<dbReference type="GO" id="GO:0004185">
    <property type="term" value="F:serine-type carboxypeptidase activity"/>
    <property type="evidence" value="ECO:0000318"/>
    <property type="project" value="GO_Central"/>
</dbReference>
<dbReference type="GO" id="GO:0006508">
    <property type="term" value="P:proteolysis"/>
    <property type="evidence" value="ECO:0007669"/>
    <property type="project" value="UniProtKB-KW"/>
</dbReference>
<dbReference type="FunFam" id="3.40.50.12670:FF:000002">
    <property type="entry name" value="Carboxypeptidase"/>
    <property type="match status" value="1"/>
</dbReference>
<dbReference type="FunFam" id="3.40.50.1820:FF:000335">
    <property type="entry name" value="Carboxypeptidase"/>
    <property type="match status" value="1"/>
</dbReference>
<dbReference type="Gene3D" id="3.40.50.12670">
    <property type="match status" value="1"/>
</dbReference>
<dbReference type="Gene3D" id="3.40.50.1820">
    <property type="entry name" value="alpha/beta hydrolase"/>
    <property type="match status" value="1"/>
</dbReference>
<dbReference type="InterPro" id="IPR029058">
    <property type="entry name" value="AB_hydrolase_fold"/>
</dbReference>
<dbReference type="InterPro" id="IPR001563">
    <property type="entry name" value="Peptidase_S10"/>
</dbReference>
<dbReference type="InterPro" id="IPR033124">
    <property type="entry name" value="Ser_caboxypep_his_AS"/>
</dbReference>
<dbReference type="InterPro" id="IPR018202">
    <property type="entry name" value="Ser_caboxypep_ser_AS"/>
</dbReference>
<dbReference type="PANTHER" id="PTHR11802:SF70">
    <property type="entry name" value="SERINE CARBOXYPEPTIDASE CTSA-3.1"/>
    <property type="match status" value="1"/>
</dbReference>
<dbReference type="PANTHER" id="PTHR11802">
    <property type="entry name" value="SERINE PROTEASE FAMILY S10 SERINE CARBOXYPEPTIDASE"/>
    <property type="match status" value="1"/>
</dbReference>
<dbReference type="Pfam" id="PF00450">
    <property type="entry name" value="Peptidase_S10"/>
    <property type="match status" value="1"/>
</dbReference>
<dbReference type="PRINTS" id="PR00724">
    <property type="entry name" value="CRBOXYPTASEC"/>
</dbReference>
<dbReference type="SUPFAM" id="SSF53474">
    <property type="entry name" value="alpha/beta-Hydrolases"/>
    <property type="match status" value="1"/>
</dbReference>
<dbReference type="PROSITE" id="PS00560">
    <property type="entry name" value="CARBOXYPEPT_SER_HIS"/>
    <property type="match status" value="1"/>
</dbReference>
<dbReference type="PROSITE" id="PS00131">
    <property type="entry name" value="CARBOXYPEPT_SER_SER"/>
    <property type="match status" value="1"/>
</dbReference>
<protein>
    <recommendedName>
        <fullName evidence="4">Serine carboxypeptidase ctsa-3.1</fullName>
        <ecNumber evidence="1">3.4.16.-</ecNumber>
    </recommendedName>
</protein>